<gene>
    <name evidence="1" type="primary">petG</name>
</gene>
<name>PETG_LEPVR</name>
<keyword id="KW-0150">Chloroplast</keyword>
<keyword id="KW-0249">Electron transport</keyword>
<keyword id="KW-0472">Membrane</keyword>
<keyword id="KW-0602">Photosynthesis</keyword>
<keyword id="KW-0934">Plastid</keyword>
<keyword id="KW-0793">Thylakoid</keyword>
<keyword id="KW-0812">Transmembrane</keyword>
<keyword id="KW-1133">Transmembrane helix</keyword>
<keyword id="KW-0813">Transport</keyword>
<sequence length="37" mass="4204">MIEVFLFGIVLGLIPITLAGLFVTAYLQYRRGDQLDF</sequence>
<evidence type="ECO:0000255" key="1">
    <source>
        <dbReference type="HAMAP-Rule" id="MF_00432"/>
    </source>
</evidence>
<organism>
    <name type="scientific">Lepidium virginicum</name>
    <name type="common">Virginia pepperweed</name>
    <dbReference type="NCBI Taxonomy" id="59292"/>
    <lineage>
        <taxon>Eukaryota</taxon>
        <taxon>Viridiplantae</taxon>
        <taxon>Streptophyta</taxon>
        <taxon>Embryophyta</taxon>
        <taxon>Tracheophyta</taxon>
        <taxon>Spermatophyta</taxon>
        <taxon>Magnoliopsida</taxon>
        <taxon>eudicotyledons</taxon>
        <taxon>Gunneridae</taxon>
        <taxon>Pentapetalae</taxon>
        <taxon>rosids</taxon>
        <taxon>malvids</taxon>
        <taxon>Brassicales</taxon>
        <taxon>Brassicaceae</taxon>
        <taxon>Lepidieae</taxon>
        <taxon>Lepidium</taxon>
    </lineage>
</organism>
<comment type="function">
    <text evidence="1">Component of the cytochrome b6-f complex, which mediates electron transfer between photosystem II (PSII) and photosystem I (PSI), cyclic electron flow around PSI, and state transitions. PetG is required for either the stability or assembly of the cytochrome b6-f complex.</text>
</comment>
<comment type="subunit">
    <text evidence="1">The 4 large subunits of the cytochrome b6-f complex are cytochrome b6, subunit IV (17 kDa polypeptide, PetD), cytochrome f and the Rieske protein, while the 4 small subunits are PetG, PetL, PetM and PetN. The complex functions as a dimer.</text>
</comment>
<comment type="subcellular location">
    <subcellularLocation>
        <location evidence="1">Plastid</location>
        <location evidence="1">Chloroplast thylakoid membrane</location>
        <topology evidence="1">Single-pass membrane protein</topology>
    </subcellularLocation>
</comment>
<comment type="similarity">
    <text evidence="1">Belongs to the PetG family.</text>
</comment>
<dbReference type="EMBL" id="AP009374">
    <property type="protein sequence ID" value="BAF50480.1"/>
    <property type="molecule type" value="Genomic_DNA"/>
</dbReference>
<dbReference type="RefSeq" id="YP_001123656.1">
    <property type="nucleotide sequence ID" value="NC_009273.1"/>
</dbReference>
<dbReference type="SMR" id="A4QLC5"/>
<dbReference type="GeneID" id="4961977"/>
<dbReference type="GO" id="GO:0009535">
    <property type="term" value="C:chloroplast thylakoid membrane"/>
    <property type="evidence" value="ECO:0007669"/>
    <property type="project" value="UniProtKB-SubCell"/>
</dbReference>
<dbReference type="GO" id="GO:0009512">
    <property type="term" value="C:cytochrome b6f complex"/>
    <property type="evidence" value="ECO:0007669"/>
    <property type="project" value="InterPro"/>
</dbReference>
<dbReference type="GO" id="GO:0045158">
    <property type="term" value="F:electron transporter, transferring electrons within cytochrome b6/f complex of photosystem II activity"/>
    <property type="evidence" value="ECO:0007669"/>
    <property type="project" value="UniProtKB-UniRule"/>
</dbReference>
<dbReference type="GO" id="GO:0017004">
    <property type="term" value="P:cytochrome complex assembly"/>
    <property type="evidence" value="ECO:0007669"/>
    <property type="project" value="UniProtKB-UniRule"/>
</dbReference>
<dbReference type="GO" id="GO:0015979">
    <property type="term" value="P:photosynthesis"/>
    <property type="evidence" value="ECO:0007669"/>
    <property type="project" value="UniProtKB-KW"/>
</dbReference>
<dbReference type="HAMAP" id="MF_00432">
    <property type="entry name" value="Cytb6_f_PetG"/>
    <property type="match status" value="1"/>
</dbReference>
<dbReference type="InterPro" id="IPR003683">
    <property type="entry name" value="Cyt_6/f_cplx_su5"/>
</dbReference>
<dbReference type="InterPro" id="IPR036099">
    <property type="entry name" value="Cyt_6/f_cplx_su5_sf"/>
</dbReference>
<dbReference type="NCBIfam" id="NF001907">
    <property type="entry name" value="PRK00665.1"/>
    <property type="match status" value="1"/>
</dbReference>
<dbReference type="Pfam" id="PF02529">
    <property type="entry name" value="PetG"/>
    <property type="match status" value="1"/>
</dbReference>
<dbReference type="PIRSF" id="PIRSF000034">
    <property type="entry name" value="Cyt_b6-f_V"/>
    <property type="match status" value="1"/>
</dbReference>
<dbReference type="SUPFAM" id="SSF103446">
    <property type="entry name" value="PetG subunit of the cytochrome b6f complex"/>
    <property type="match status" value="1"/>
</dbReference>
<reference key="1">
    <citation type="submission" date="2007-03" db="EMBL/GenBank/DDBJ databases">
        <title>Sequencing analysis of Lepidium virginicum JO26 chloroplast DNA.</title>
        <authorList>
            <person name="Hosouchi T."/>
            <person name="Tsuruoka H."/>
            <person name="Kotani H."/>
        </authorList>
    </citation>
    <scope>NUCLEOTIDE SEQUENCE [LARGE SCALE GENOMIC DNA]</scope>
</reference>
<feature type="chain" id="PRO_0000355394" description="Cytochrome b6-f complex subunit 5">
    <location>
        <begin position="1"/>
        <end position="37"/>
    </location>
</feature>
<feature type="transmembrane region" description="Helical" evidence="1">
    <location>
        <begin position="5"/>
        <end position="25"/>
    </location>
</feature>
<accession>A4QLC5</accession>
<protein>
    <recommendedName>
        <fullName evidence="1">Cytochrome b6-f complex subunit 5</fullName>
    </recommendedName>
    <alternativeName>
        <fullName evidence="1">Cytochrome b6-f complex subunit PetG</fullName>
    </alternativeName>
    <alternativeName>
        <fullName evidence="1">Cytochrome b6-f complex subunit V</fullName>
    </alternativeName>
</protein>
<geneLocation type="chloroplast"/>
<proteinExistence type="inferred from homology"/>